<proteinExistence type="inferred from homology"/>
<gene>
    <name evidence="1" type="primary">bpt</name>
    <name type="ordered locus">Daro_1195</name>
</gene>
<dbReference type="EC" id="2.3.2.29" evidence="1"/>
<dbReference type="EMBL" id="CP000089">
    <property type="protein sequence ID" value="AAZ45951.1"/>
    <property type="molecule type" value="Genomic_DNA"/>
</dbReference>
<dbReference type="SMR" id="Q47GT0"/>
<dbReference type="STRING" id="159087.Daro_1195"/>
<dbReference type="KEGG" id="dar:Daro_1195"/>
<dbReference type="eggNOG" id="COG2935">
    <property type="taxonomic scope" value="Bacteria"/>
</dbReference>
<dbReference type="HOGENOM" id="CLU_077607_0_0_4"/>
<dbReference type="OrthoDB" id="9782022at2"/>
<dbReference type="GO" id="GO:0005737">
    <property type="term" value="C:cytoplasm"/>
    <property type="evidence" value="ECO:0007669"/>
    <property type="project" value="UniProtKB-SubCell"/>
</dbReference>
<dbReference type="GO" id="GO:0004057">
    <property type="term" value="F:arginyl-tRNA--protein transferase activity"/>
    <property type="evidence" value="ECO:0007669"/>
    <property type="project" value="InterPro"/>
</dbReference>
<dbReference type="GO" id="GO:0008914">
    <property type="term" value="F:leucyl-tRNA--protein transferase activity"/>
    <property type="evidence" value="ECO:0007669"/>
    <property type="project" value="UniProtKB-UniRule"/>
</dbReference>
<dbReference type="GO" id="GO:0071596">
    <property type="term" value="P:ubiquitin-dependent protein catabolic process via the N-end rule pathway"/>
    <property type="evidence" value="ECO:0007669"/>
    <property type="project" value="InterPro"/>
</dbReference>
<dbReference type="HAMAP" id="MF_00689">
    <property type="entry name" value="Bpt"/>
    <property type="match status" value="1"/>
</dbReference>
<dbReference type="InterPro" id="IPR016181">
    <property type="entry name" value="Acyl_CoA_acyltransferase"/>
</dbReference>
<dbReference type="InterPro" id="IPR017138">
    <property type="entry name" value="Asp_Glu_LeuTrfase"/>
</dbReference>
<dbReference type="InterPro" id="IPR030700">
    <property type="entry name" value="N-end_Aminoacyl_Trfase"/>
</dbReference>
<dbReference type="InterPro" id="IPR007472">
    <property type="entry name" value="N-end_Aminoacyl_Trfase_C"/>
</dbReference>
<dbReference type="InterPro" id="IPR007471">
    <property type="entry name" value="N-end_Aminoacyl_Trfase_N"/>
</dbReference>
<dbReference type="NCBIfam" id="NF002341">
    <property type="entry name" value="PRK01305.1-1"/>
    <property type="match status" value="1"/>
</dbReference>
<dbReference type="NCBIfam" id="NF002342">
    <property type="entry name" value="PRK01305.1-3"/>
    <property type="match status" value="1"/>
</dbReference>
<dbReference type="NCBIfam" id="NF002346">
    <property type="entry name" value="PRK01305.2-3"/>
    <property type="match status" value="1"/>
</dbReference>
<dbReference type="PANTHER" id="PTHR21367">
    <property type="entry name" value="ARGININE-TRNA-PROTEIN TRANSFERASE 1"/>
    <property type="match status" value="1"/>
</dbReference>
<dbReference type="PANTHER" id="PTHR21367:SF1">
    <property type="entry name" value="ARGINYL-TRNA--PROTEIN TRANSFERASE 1"/>
    <property type="match status" value="1"/>
</dbReference>
<dbReference type="Pfam" id="PF04377">
    <property type="entry name" value="ATE_C"/>
    <property type="match status" value="1"/>
</dbReference>
<dbReference type="Pfam" id="PF04376">
    <property type="entry name" value="ATE_N"/>
    <property type="match status" value="1"/>
</dbReference>
<dbReference type="PIRSF" id="PIRSF037208">
    <property type="entry name" value="ATE_pro_prd"/>
    <property type="match status" value="1"/>
</dbReference>
<dbReference type="SUPFAM" id="SSF55729">
    <property type="entry name" value="Acyl-CoA N-acyltransferases (Nat)"/>
    <property type="match status" value="1"/>
</dbReference>
<name>BPT_DECAR</name>
<reference key="1">
    <citation type="journal article" date="2009" name="BMC Genomics">
        <title>Metabolic analysis of the soil microbe Dechloromonas aromatica str. RCB: indications of a surprisingly complex life-style and cryptic anaerobic pathways for aromatic degradation.</title>
        <authorList>
            <person name="Salinero K.K."/>
            <person name="Keller K."/>
            <person name="Feil W.S."/>
            <person name="Feil H."/>
            <person name="Trong S."/>
            <person name="Di Bartolo G."/>
            <person name="Lapidus A."/>
        </authorList>
    </citation>
    <scope>NUCLEOTIDE SEQUENCE [LARGE SCALE GENOMIC DNA]</scope>
    <source>
        <strain>RCB</strain>
    </source>
</reference>
<accession>Q47GT0</accession>
<sequence length="247" mass="28347">MAQPDDAALPFSLLQFYATSPYPCSYLPDREARSQVATPAHLIDSEIYSSLIRTGFRRSGIFTYRPHCDGCKACVPVRLPVTELRPNRSQRRAMKHHAKLRVRELPLVYIDEHYALYNRYQQARHPGGGMDEDSHEQYAQFLLQSRVDTRLIEFSDDEGIRMVSLIDVLDDGLSSVYTFYDPDIPDASFGTYNILWQAAQCQALGLPYLYLGYWIANSRKMAYKAMFQPIEGLIDGHWLALPKLEKT</sequence>
<organism>
    <name type="scientific">Dechloromonas aromatica (strain RCB)</name>
    <dbReference type="NCBI Taxonomy" id="159087"/>
    <lineage>
        <taxon>Bacteria</taxon>
        <taxon>Pseudomonadati</taxon>
        <taxon>Pseudomonadota</taxon>
        <taxon>Betaproteobacteria</taxon>
        <taxon>Rhodocyclales</taxon>
        <taxon>Azonexaceae</taxon>
        <taxon>Dechloromonas</taxon>
    </lineage>
</organism>
<comment type="function">
    <text evidence="1">Functions in the N-end rule pathway of protein degradation where it conjugates Leu from its aminoacyl-tRNA to the N-termini of proteins containing an N-terminal aspartate or glutamate.</text>
</comment>
<comment type="catalytic activity">
    <reaction evidence="1">
        <text>N-terminal L-glutamyl-[protein] + L-leucyl-tRNA(Leu) = N-terminal L-leucyl-L-glutamyl-[protein] + tRNA(Leu) + H(+)</text>
        <dbReference type="Rhea" id="RHEA:50412"/>
        <dbReference type="Rhea" id="RHEA-COMP:9613"/>
        <dbReference type="Rhea" id="RHEA-COMP:9622"/>
        <dbReference type="Rhea" id="RHEA-COMP:12664"/>
        <dbReference type="Rhea" id="RHEA-COMP:12668"/>
        <dbReference type="ChEBI" id="CHEBI:15378"/>
        <dbReference type="ChEBI" id="CHEBI:64721"/>
        <dbReference type="ChEBI" id="CHEBI:78442"/>
        <dbReference type="ChEBI" id="CHEBI:78494"/>
        <dbReference type="ChEBI" id="CHEBI:133041"/>
        <dbReference type="EC" id="2.3.2.29"/>
    </reaction>
</comment>
<comment type="catalytic activity">
    <reaction evidence="1">
        <text>N-terminal L-aspartyl-[protein] + L-leucyl-tRNA(Leu) = N-terminal L-leucyl-L-aspartyl-[protein] + tRNA(Leu) + H(+)</text>
        <dbReference type="Rhea" id="RHEA:50420"/>
        <dbReference type="Rhea" id="RHEA-COMP:9613"/>
        <dbReference type="Rhea" id="RHEA-COMP:9622"/>
        <dbReference type="Rhea" id="RHEA-COMP:12669"/>
        <dbReference type="Rhea" id="RHEA-COMP:12674"/>
        <dbReference type="ChEBI" id="CHEBI:15378"/>
        <dbReference type="ChEBI" id="CHEBI:64720"/>
        <dbReference type="ChEBI" id="CHEBI:78442"/>
        <dbReference type="ChEBI" id="CHEBI:78494"/>
        <dbReference type="ChEBI" id="CHEBI:133042"/>
        <dbReference type="EC" id="2.3.2.29"/>
    </reaction>
</comment>
<comment type="subcellular location">
    <subcellularLocation>
        <location evidence="1">Cytoplasm</location>
    </subcellularLocation>
</comment>
<comment type="similarity">
    <text evidence="1">Belongs to the R-transferase family. Bpt subfamily.</text>
</comment>
<keyword id="KW-0012">Acyltransferase</keyword>
<keyword id="KW-0963">Cytoplasm</keyword>
<keyword id="KW-0808">Transferase</keyword>
<protein>
    <recommendedName>
        <fullName evidence="1">Aspartate/glutamate leucyltransferase</fullName>
        <ecNumber evidence="1">2.3.2.29</ecNumber>
    </recommendedName>
</protein>
<evidence type="ECO:0000255" key="1">
    <source>
        <dbReference type="HAMAP-Rule" id="MF_00689"/>
    </source>
</evidence>
<feature type="chain" id="PRO_0000263184" description="Aspartate/glutamate leucyltransferase">
    <location>
        <begin position="1"/>
        <end position="247"/>
    </location>
</feature>